<proteinExistence type="evidence at transcript level"/>
<comment type="function">
    <text evidence="3 7">Prenyltransferase; part of the gene cluster that mediates the biosynthesis of dibenzodioxocinones such as pestalotiollide B, a novel class of inhibitors against cholesterol ester transfer protein (CEPT) (PubMed:31474098). The biosynthesis initiates from condensation of acetate and malonate units catalyzed by the non-reducing PKS pks8/GME11356. Pks8/GME11356 lacks a thioesterase (TE) domain, which is important to the cyclizing of the third ring of atrochrysone carboxylic acid, and the esterase GME11355 might play the role of TE and catalyzes the cyclization reaction of the C ring. The lactamase-like protein GME11357 (or other beta-lactamases in Pestalotiopsis microspora) probably hydrolyzes the thioester bond between the ACP of pks8/GME11356 and the intermediate to release atrochrysone carboxylic acid, which is spontaneously dehydrates to form endocrocin anthrone. Endocrocin anthrone is further converted to emodin via the endocrocin intermediate. Emodin is then oxidized by several enzymes such as the Baeyer-Villiger oxidase GME11358, the oxidoreductase GME11367, the short chain dehydrogenase/reductase GME11373, as well as by other oxidoreductases from the cluster, to modify the A and C rings and open the B ring, and finally yield monodictyphenone. The prenyltransferase GME11375 may catalyze the addition reaction between the C5 side chains and the carbon bone of dibenzodioxocinones. The remaining biochemical reactions to the final product dibenzodioxocinones should be methylation catalyzed by methyltransferase GME11366 and reduction and lactonization reaction catalyzed by a series of oxidordeuctases (Probable).</text>
</comment>
<comment type="pathway">
    <text evidence="3">Secondary metabolite biosynthesis.</text>
</comment>
<comment type="induction">
    <text evidence="4">The expression of the dibenzodioxocinones biosynthesis cluster is positively regulated by the transcription factor dibT.</text>
</comment>
<comment type="disruption phenotype">
    <text evidence="3">Completely abolishes the production of pestalotiollide B.</text>
</comment>
<comment type="similarity">
    <text evidence="6">Belongs to the tryptophan dimethylallyltransferase family.</text>
</comment>
<evidence type="ECO:0000250" key="1">
    <source>
        <dbReference type="UniProtKB" id="Q4WAW7"/>
    </source>
</evidence>
<evidence type="ECO:0000250" key="2">
    <source>
        <dbReference type="UniProtKB" id="Q50EL0"/>
    </source>
</evidence>
<evidence type="ECO:0000269" key="3">
    <source>
    </source>
</evidence>
<evidence type="ECO:0000269" key="4">
    <source>
    </source>
</evidence>
<evidence type="ECO:0000303" key="5">
    <source>
    </source>
</evidence>
<evidence type="ECO:0000305" key="6"/>
<evidence type="ECO:0000305" key="7">
    <source>
    </source>
</evidence>
<dbReference type="EC" id="2.5.1.-" evidence="7"/>
<dbReference type="EMBL" id="MK590994">
    <property type="protein sequence ID" value="QED41506.1"/>
    <property type="molecule type" value="mRNA"/>
</dbReference>
<dbReference type="SMR" id="A0A5B8YWJ9"/>
<dbReference type="GO" id="GO:0004659">
    <property type="term" value="F:prenyltransferase activity"/>
    <property type="evidence" value="ECO:0007669"/>
    <property type="project" value="TreeGrafter"/>
</dbReference>
<dbReference type="GO" id="GO:0009820">
    <property type="term" value="P:alkaloid metabolic process"/>
    <property type="evidence" value="ECO:0007669"/>
    <property type="project" value="InterPro"/>
</dbReference>
<dbReference type="CDD" id="cd13929">
    <property type="entry name" value="PT-DMATS_CymD"/>
    <property type="match status" value="1"/>
</dbReference>
<dbReference type="InterPro" id="IPR033964">
    <property type="entry name" value="Aro_prenylTrfase"/>
</dbReference>
<dbReference type="InterPro" id="IPR017795">
    <property type="entry name" value="Aro_prenylTrfase_DMATS"/>
</dbReference>
<dbReference type="InterPro" id="IPR012148">
    <property type="entry name" value="DMATS-type_fun"/>
</dbReference>
<dbReference type="NCBIfam" id="TIGR03429">
    <property type="entry name" value="arom_pren_DMATS"/>
    <property type="match status" value="1"/>
</dbReference>
<dbReference type="PANTHER" id="PTHR40627">
    <property type="entry name" value="INDOLE PRENYLTRANSFERASE TDIB-RELATED"/>
    <property type="match status" value="1"/>
</dbReference>
<dbReference type="PANTHER" id="PTHR40627:SF4">
    <property type="entry name" value="PRENYLTRANSFERASE ASQH1-RELATED"/>
    <property type="match status" value="1"/>
</dbReference>
<dbReference type="Pfam" id="PF11991">
    <property type="entry name" value="Trp_DMAT"/>
    <property type="match status" value="1"/>
</dbReference>
<dbReference type="PIRSF" id="PIRSF000509">
    <property type="entry name" value="Trp_DMAT"/>
    <property type="match status" value="1"/>
</dbReference>
<dbReference type="SFLD" id="SFLDS00036">
    <property type="entry name" value="Aromatic_Prenyltransferase"/>
    <property type="match status" value="1"/>
</dbReference>
<dbReference type="SFLD" id="SFLDG01162">
    <property type="entry name" value="I"/>
    <property type="match status" value="1"/>
</dbReference>
<name>GME75_PESMI</name>
<feature type="chain" id="PRO_0000456736" description="Prenyltransferase GME11375">
    <location>
        <begin position="1"/>
        <end position="467"/>
    </location>
</feature>
<feature type="binding site" evidence="2">
    <location>
        <position position="93"/>
    </location>
    <ligand>
        <name>L-tryptophan</name>
        <dbReference type="ChEBI" id="CHEBI:57912"/>
    </ligand>
</feature>
<feature type="binding site" evidence="1">
    <location>
        <position position="108"/>
    </location>
    <ligand>
        <name>dimethylallyl diphosphate</name>
        <dbReference type="ChEBI" id="CHEBI:57623"/>
    </ligand>
</feature>
<feature type="binding site" evidence="1">
    <location>
        <position position="196"/>
    </location>
    <ligand>
        <name>dimethylallyl diphosphate</name>
        <dbReference type="ChEBI" id="CHEBI:57623"/>
    </ligand>
</feature>
<feature type="binding site" evidence="1">
    <location>
        <position position="198"/>
    </location>
    <ligand>
        <name>dimethylallyl diphosphate</name>
        <dbReference type="ChEBI" id="CHEBI:57623"/>
    </ligand>
</feature>
<feature type="binding site" evidence="1">
    <location>
        <position position="266"/>
    </location>
    <ligand>
        <name>dimethylallyl diphosphate</name>
        <dbReference type="ChEBI" id="CHEBI:57623"/>
    </ligand>
</feature>
<feature type="binding site" evidence="1">
    <location>
        <position position="268"/>
    </location>
    <ligand>
        <name>dimethylallyl diphosphate</name>
        <dbReference type="ChEBI" id="CHEBI:57623"/>
    </ligand>
</feature>
<feature type="binding site" evidence="1">
    <location>
        <position position="436"/>
    </location>
    <ligand>
        <name>dimethylallyl diphosphate</name>
        <dbReference type="ChEBI" id="CHEBI:57623"/>
    </ligand>
</feature>
<keyword id="KW-0808">Transferase</keyword>
<organism>
    <name type="scientific">Pestalotiopsis microspora</name>
    <dbReference type="NCBI Taxonomy" id="85828"/>
    <lineage>
        <taxon>Eukaryota</taxon>
        <taxon>Fungi</taxon>
        <taxon>Dikarya</taxon>
        <taxon>Ascomycota</taxon>
        <taxon>Pezizomycotina</taxon>
        <taxon>Sordariomycetes</taxon>
        <taxon>Xylariomycetidae</taxon>
        <taxon>Amphisphaeriales</taxon>
        <taxon>Sporocadaceae</taxon>
        <taxon>Pestalotiopsis</taxon>
    </lineage>
</organism>
<sequence>MNGQKDVVQVSEAWQTLSTYLPPVTADRDYWWQLTGRHVAALVEAAGYPIEKQYEALIFHYHWTVPYMGPAPKADGTPATWKSLLGLDGSPIEYSWKWNTTRSEPDVRYVTEPIGQHPGSHLDPLNQHALRELLQRFSKNMPSSDMNMSWVNHFFARLYDHDNTRYIQEAAAGSSRSTATSVQLGTEFLRRGIGFKTYFFPRKLGQVDDISISQYGASMSQLDVDETSWDARKALVEFLETNPEGKSLRPFSLAVDNVAPSQSRLKWYFHTLHTSIDSVREIMTLGGRINGIDKQLEELEDLIRVVAGLASDFPTNAEIPLPKKSDVYDQSAKDNFGELEDVLTGYLYYFDIAPGQGKLPEVKWFIPSRHYGPNDRELASALGAWMEARGRGAYNEPYMKMLHTLSAHRGLGDGKGLQTFISCLFKPSGDLDITTYLGAEAFHPGRVAKMAKPNGRSPRATLRRGDD</sequence>
<gene>
    <name evidence="5" type="ORF">GME11375</name>
</gene>
<protein>
    <recommendedName>
        <fullName evidence="5">Prenyltransferase GME11375</fullName>
        <ecNumber evidence="7">2.5.1.-</ecNumber>
    </recommendedName>
    <alternativeName>
        <fullName evidence="5">Dibenzodioxocinones biosynthesis cluster protein GME11375</fullName>
    </alternativeName>
</protein>
<reference key="1">
    <citation type="journal article" date="2019" name="J. Microbiol. Biotechnol.">
        <title>A gene cluster for the biosynthesis of dibenzodioxocinons in the endophyte Pestalotiopsis microspora, a taxol producer.</title>
        <authorList>
            <person name="Liu Y."/>
            <person name="Chen L."/>
            <person name="Xie Q."/>
            <person name="Yu X."/>
            <person name="Duan A."/>
            <person name="Lin Y."/>
            <person name="Xiang B."/>
            <person name="Hao X."/>
            <person name="Chen W."/>
            <person name="Zhu X."/>
        </authorList>
    </citation>
    <scope>NUCLEOTIDE SEQUENCE [MRNA]</scope>
    <scope>FUNCTION</scope>
    <scope>DISRUPTION PHENOTYPE</scope>
    <scope>PATHWAY</scope>
    <source>
        <strain>NK17</strain>
    </source>
</reference>
<reference key="2">
    <citation type="journal article" date="2022" name="Microbiol. Res.">
        <title>Acquiring novel chemicals by overexpression of a transcription factor DibT in the dibenzodioxocinone biosynthetic cluster in Pestalotiopsis microspora.</title>
        <authorList>
            <person name="Liu Y."/>
            <person name="Fu Y."/>
            <person name="Zhou M."/>
            <person name="Hao X."/>
            <person name="Zhang P."/>
            <person name="Zhu X."/>
        </authorList>
    </citation>
    <scope>INDUCTION</scope>
</reference>
<accession>A0A5B8YWJ9</accession>